<evidence type="ECO:0000255" key="1">
    <source>
        <dbReference type="HAMAP-Rule" id="MF_00170"/>
    </source>
</evidence>
<name>RPIA_STRGC</name>
<reference key="1">
    <citation type="journal article" date="2007" name="J. Bacteriol.">
        <title>Genome-wide transcriptional changes in Streptococcus gordonii in response to competence signaling peptide.</title>
        <authorList>
            <person name="Vickerman M.M."/>
            <person name="Iobst S."/>
            <person name="Jesionowski A.M."/>
            <person name="Gill S.R."/>
        </authorList>
    </citation>
    <scope>NUCLEOTIDE SEQUENCE [LARGE SCALE GENOMIC DNA]</scope>
    <source>
        <strain>Challis / ATCC 35105 / BCRC 15272 / CH1 / DL1 / V288</strain>
    </source>
</reference>
<protein>
    <recommendedName>
        <fullName evidence="1">Ribose-5-phosphate isomerase A</fullName>
        <ecNumber evidence="1">5.3.1.6</ecNumber>
    </recommendedName>
    <alternativeName>
        <fullName evidence="1">Phosphoriboisomerase A</fullName>
        <shortName evidence="1">PRI</shortName>
    </alternativeName>
</protein>
<keyword id="KW-0413">Isomerase</keyword>
<keyword id="KW-1185">Reference proteome</keyword>
<dbReference type="EC" id="5.3.1.6" evidence="1"/>
<dbReference type="EMBL" id="CP000725">
    <property type="protein sequence ID" value="ABV10855.1"/>
    <property type="molecule type" value="Genomic_DNA"/>
</dbReference>
<dbReference type="RefSeq" id="WP_012000660.1">
    <property type="nucleotide sequence ID" value="NC_009785.1"/>
</dbReference>
<dbReference type="SMR" id="A8AXN9"/>
<dbReference type="STRING" id="467705.SGO_1265"/>
<dbReference type="KEGG" id="sgo:SGO_1265"/>
<dbReference type="eggNOG" id="COG0120">
    <property type="taxonomic scope" value="Bacteria"/>
</dbReference>
<dbReference type="HOGENOM" id="CLU_056590_1_0_9"/>
<dbReference type="UniPathway" id="UPA00115">
    <property type="reaction ID" value="UER00412"/>
</dbReference>
<dbReference type="Proteomes" id="UP000001131">
    <property type="component" value="Chromosome"/>
</dbReference>
<dbReference type="GO" id="GO:0004751">
    <property type="term" value="F:ribose-5-phosphate isomerase activity"/>
    <property type="evidence" value="ECO:0007669"/>
    <property type="project" value="UniProtKB-UniRule"/>
</dbReference>
<dbReference type="GO" id="GO:0009052">
    <property type="term" value="P:pentose-phosphate shunt, non-oxidative branch"/>
    <property type="evidence" value="ECO:0007669"/>
    <property type="project" value="UniProtKB-UniRule"/>
</dbReference>
<dbReference type="CDD" id="cd01398">
    <property type="entry name" value="RPI_A"/>
    <property type="match status" value="1"/>
</dbReference>
<dbReference type="FunFam" id="3.40.50.1360:FF:000001">
    <property type="entry name" value="Ribose-5-phosphate isomerase A"/>
    <property type="match status" value="1"/>
</dbReference>
<dbReference type="Gene3D" id="3.30.70.260">
    <property type="match status" value="1"/>
</dbReference>
<dbReference type="Gene3D" id="3.40.50.1360">
    <property type="match status" value="1"/>
</dbReference>
<dbReference type="HAMAP" id="MF_00170">
    <property type="entry name" value="Rib_5P_isom_A"/>
    <property type="match status" value="1"/>
</dbReference>
<dbReference type="InterPro" id="IPR037171">
    <property type="entry name" value="NagB/RpiA_transferase-like"/>
</dbReference>
<dbReference type="InterPro" id="IPR050262">
    <property type="entry name" value="Ribose-5P_isomerase"/>
</dbReference>
<dbReference type="InterPro" id="IPR020672">
    <property type="entry name" value="Ribose5P_isomerase_typA_subgr"/>
</dbReference>
<dbReference type="InterPro" id="IPR004788">
    <property type="entry name" value="Ribose5P_isomerase_type_A"/>
</dbReference>
<dbReference type="NCBIfam" id="NF001924">
    <property type="entry name" value="PRK00702.1"/>
    <property type="match status" value="1"/>
</dbReference>
<dbReference type="NCBIfam" id="TIGR00021">
    <property type="entry name" value="rpiA"/>
    <property type="match status" value="1"/>
</dbReference>
<dbReference type="PANTHER" id="PTHR43748">
    <property type="entry name" value="RIBOSE-5-PHOSPHATE ISOMERASE 3, CHLOROPLASTIC-RELATED"/>
    <property type="match status" value="1"/>
</dbReference>
<dbReference type="PANTHER" id="PTHR43748:SF3">
    <property type="entry name" value="RIBOSE-5-PHOSPHATE ISOMERASE 3, CHLOROPLASTIC-RELATED"/>
    <property type="match status" value="1"/>
</dbReference>
<dbReference type="Pfam" id="PF06026">
    <property type="entry name" value="Rib_5-P_isom_A"/>
    <property type="match status" value="1"/>
</dbReference>
<dbReference type="SUPFAM" id="SSF75445">
    <property type="entry name" value="D-ribose-5-phosphate isomerase (RpiA), lid domain"/>
    <property type="match status" value="1"/>
</dbReference>
<dbReference type="SUPFAM" id="SSF100950">
    <property type="entry name" value="NagB/RpiA/CoA transferase-like"/>
    <property type="match status" value="1"/>
</dbReference>
<accession>A8AXN9</accession>
<gene>
    <name evidence="1" type="primary">rpiA</name>
    <name type="ordered locus">SGO_1265</name>
</gene>
<proteinExistence type="inferred from homology"/>
<feature type="chain" id="PRO_1000077080" description="Ribose-5-phosphate isomerase A">
    <location>
        <begin position="1"/>
        <end position="225"/>
    </location>
</feature>
<feature type="active site" description="Proton acceptor" evidence="1">
    <location>
        <position position="104"/>
    </location>
</feature>
<feature type="binding site" evidence="1">
    <location>
        <begin position="26"/>
        <end position="29"/>
    </location>
    <ligand>
        <name>substrate</name>
    </ligand>
</feature>
<feature type="binding site" evidence="1">
    <location>
        <begin position="82"/>
        <end position="85"/>
    </location>
    <ligand>
        <name>substrate</name>
    </ligand>
</feature>
<feature type="binding site" evidence="1">
    <location>
        <begin position="95"/>
        <end position="98"/>
    </location>
    <ligand>
        <name>substrate</name>
    </ligand>
</feature>
<feature type="binding site" evidence="1">
    <location>
        <position position="122"/>
    </location>
    <ligand>
        <name>substrate</name>
    </ligand>
</feature>
<sequence length="225" mass="24551">MENLKKMAGIKAAEFVTDGMVVGLGTGSTAYYFVEEIGRRIKEEGLQIIAVTTSSVTSQQAEGLGIPLKSIDEVDLVDVTVDGADEVDPNFNGIKGGGGALLMEKVVATPTKSYIWVVDESKLVEKLGAFKLPVEVVQYGAEQVFRRFERAGYKPAFRQKDGQRFVTDMKNFIIDLDLGVIENPIEFARELDHIVGIVEHGLFNQMVDKVIVAGKAGVQVLEANK</sequence>
<comment type="function">
    <text evidence="1">Catalyzes the reversible conversion of ribose-5-phosphate to ribulose 5-phosphate.</text>
</comment>
<comment type="catalytic activity">
    <reaction evidence="1">
        <text>aldehydo-D-ribose 5-phosphate = D-ribulose 5-phosphate</text>
        <dbReference type="Rhea" id="RHEA:14657"/>
        <dbReference type="ChEBI" id="CHEBI:58121"/>
        <dbReference type="ChEBI" id="CHEBI:58273"/>
        <dbReference type="EC" id="5.3.1.6"/>
    </reaction>
</comment>
<comment type="pathway">
    <text evidence="1">Carbohydrate degradation; pentose phosphate pathway; D-ribose 5-phosphate from D-ribulose 5-phosphate (non-oxidative stage): step 1/1.</text>
</comment>
<comment type="subunit">
    <text evidence="1">Homodimer.</text>
</comment>
<comment type="similarity">
    <text evidence="1">Belongs to the ribose 5-phosphate isomerase family.</text>
</comment>
<organism>
    <name type="scientific">Streptococcus gordonii (strain Challis / ATCC 35105 / BCRC 15272 / CH1 / DL1 / V288)</name>
    <dbReference type="NCBI Taxonomy" id="467705"/>
    <lineage>
        <taxon>Bacteria</taxon>
        <taxon>Bacillati</taxon>
        <taxon>Bacillota</taxon>
        <taxon>Bacilli</taxon>
        <taxon>Lactobacillales</taxon>
        <taxon>Streptococcaceae</taxon>
        <taxon>Streptococcus</taxon>
    </lineage>
</organism>